<evidence type="ECO:0000255" key="1">
    <source>
        <dbReference type="HAMAP-Rule" id="MF_00503"/>
    </source>
</evidence>
<evidence type="ECO:0000305" key="2"/>
<dbReference type="EMBL" id="AP006861">
    <property type="protein sequence ID" value="BAE80970.1"/>
    <property type="molecule type" value="Genomic_DNA"/>
</dbReference>
<dbReference type="RefSeq" id="WP_011457752.1">
    <property type="nucleotide sequence ID" value="NC_007899.1"/>
</dbReference>
<dbReference type="SMR" id="Q255R8"/>
<dbReference type="STRING" id="264202.CF0198"/>
<dbReference type="KEGG" id="cfe:CF0198"/>
<dbReference type="eggNOG" id="COG0359">
    <property type="taxonomic scope" value="Bacteria"/>
</dbReference>
<dbReference type="HOGENOM" id="CLU_078938_3_0_0"/>
<dbReference type="OrthoDB" id="9788336at2"/>
<dbReference type="Proteomes" id="UP000001260">
    <property type="component" value="Chromosome"/>
</dbReference>
<dbReference type="GO" id="GO:1990904">
    <property type="term" value="C:ribonucleoprotein complex"/>
    <property type="evidence" value="ECO:0007669"/>
    <property type="project" value="UniProtKB-KW"/>
</dbReference>
<dbReference type="GO" id="GO:0005840">
    <property type="term" value="C:ribosome"/>
    <property type="evidence" value="ECO:0007669"/>
    <property type="project" value="UniProtKB-KW"/>
</dbReference>
<dbReference type="GO" id="GO:0019843">
    <property type="term" value="F:rRNA binding"/>
    <property type="evidence" value="ECO:0007669"/>
    <property type="project" value="UniProtKB-UniRule"/>
</dbReference>
<dbReference type="GO" id="GO:0003735">
    <property type="term" value="F:structural constituent of ribosome"/>
    <property type="evidence" value="ECO:0007669"/>
    <property type="project" value="InterPro"/>
</dbReference>
<dbReference type="GO" id="GO:0006412">
    <property type="term" value="P:translation"/>
    <property type="evidence" value="ECO:0007669"/>
    <property type="project" value="UniProtKB-UniRule"/>
</dbReference>
<dbReference type="Gene3D" id="3.10.430.100">
    <property type="entry name" value="Ribosomal protein L9, C-terminal domain"/>
    <property type="match status" value="1"/>
</dbReference>
<dbReference type="Gene3D" id="3.40.5.10">
    <property type="entry name" value="Ribosomal protein L9, N-terminal domain"/>
    <property type="match status" value="1"/>
</dbReference>
<dbReference type="HAMAP" id="MF_00503">
    <property type="entry name" value="Ribosomal_bL9"/>
    <property type="match status" value="1"/>
</dbReference>
<dbReference type="InterPro" id="IPR000244">
    <property type="entry name" value="Ribosomal_bL9"/>
</dbReference>
<dbReference type="InterPro" id="IPR009027">
    <property type="entry name" value="Ribosomal_bL9/RNase_H1_N"/>
</dbReference>
<dbReference type="InterPro" id="IPR020594">
    <property type="entry name" value="Ribosomal_bL9_bac/chp"/>
</dbReference>
<dbReference type="InterPro" id="IPR020069">
    <property type="entry name" value="Ribosomal_bL9_C"/>
</dbReference>
<dbReference type="InterPro" id="IPR036791">
    <property type="entry name" value="Ribosomal_bL9_C_sf"/>
</dbReference>
<dbReference type="InterPro" id="IPR020070">
    <property type="entry name" value="Ribosomal_bL9_N"/>
</dbReference>
<dbReference type="InterPro" id="IPR036935">
    <property type="entry name" value="Ribosomal_bL9_N_sf"/>
</dbReference>
<dbReference type="NCBIfam" id="TIGR00158">
    <property type="entry name" value="L9"/>
    <property type="match status" value="1"/>
</dbReference>
<dbReference type="PANTHER" id="PTHR21368">
    <property type="entry name" value="50S RIBOSOMAL PROTEIN L9"/>
    <property type="match status" value="1"/>
</dbReference>
<dbReference type="Pfam" id="PF03948">
    <property type="entry name" value="Ribosomal_L9_C"/>
    <property type="match status" value="1"/>
</dbReference>
<dbReference type="Pfam" id="PF01281">
    <property type="entry name" value="Ribosomal_L9_N"/>
    <property type="match status" value="1"/>
</dbReference>
<dbReference type="SUPFAM" id="SSF55658">
    <property type="entry name" value="L9 N-domain-like"/>
    <property type="match status" value="1"/>
</dbReference>
<dbReference type="SUPFAM" id="SSF55653">
    <property type="entry name" value="Ribosomal protein L9 C-domain"/>
    <property type="match status" value="1"/>
</dbReference>
<dbReference type="PROSITE" id="PS00651">
    <property type="entry name" value="RIBOSOMAL_L9"/>
    <property type="match status" value="1"/>
</dbReference>
<name>RL9_CHLFF</name>
<accession>Q255R8</accession>
<organism>
    <name type="scientific">Chlamydia felis (strain Fe/C-56)</name>
    <name type="common">Chlamydophila felis</name>
    <dbReference type="NCBI Taxonomy" id="264202"/>
    <lineage>
        <taxon>Bacteria</taxon>
        <taxon>Pseudomonadati</taxon>
        <taxon>Chlamydiota</taxon>
        <taxon>Chlamydiia</taxon>
        <taxon>Chlamydiales</taxon>
        <taxon>Chlamydiaceae</taxon>
        <taxon>Chlamydia/Chlamydophila group</taxon>
        <taxon>Chlamydia</taxon>
    </lineage>
</organism>
<sequence length="173" mass="19106">MKQQLLLLEDVDGLGRSGDIVTARPGYVRNYLLPQKKAIIAGAGTLRLQAKLKEERLLRAAEDRAESEKLAELLKDLVLEFQVRVDPDNNMYGSVTISDIIAEAAKKNVILTRKNFPNAHYAIKNLGKKSVPLKLKEGVTATLFVEVSSESAYIAVLNQQSSQEQTVAAEELE</sequence>
<comment type="function">
    <text evidence="1">Binds to the 23S rRNA.</text>
</comment>
<comment type="similarity">
    <text evidence="1">Belongs to the bacterial ribosomal protein bL9 family.</text>
</comment>
<keyword id="KW-0687">Ribonucleoprotein</keyword>
<keyword id="KW-0689">Ribosomal protein</keyword>
<keyword id="KW-0694">RNA-binding</keyword>
<keyword id="KW-0699">rRNA-binding</keyword>
<proteinExistence type="inferred from homology"/>
<reference key="1">
    <citation type="journal article" date="2006" name="DNA Res.">
        <title>Genome sequence of the cat pathogen, Chlamydophila felis.</title>
        <authorList>
            <person name="Azuma Y."/>
            <person name="Hirakawa H."/>
            <person name="Yamashita A."/>
            <person name="Cai Y."/>
            <person name="Rahman M.A."/>
            <person name="Suzuki H."/>
            <person name="Mitaku S."/>
            <person name="Toh H."/>
            <person name="Goto S."/>
            <person name="Murakami T."/>
            <person name="Sugi K."/>
            <person name="Hayashi H."/>
            <person name="Fukushi H."/>
            <person name="Hattori M."/>
            <person name="Kuhara S."/>
            <person name="Shirai M."/>
        </authorList>
    </citation>
    <scope>NUCLEOTIDE SEQUENCE [LARGE SCALE GENOMIC DNA]</scope>
    <source>
        <strain>Fe/C-56</strain>
    </source>
</reference>
<feature type="chain" id="PRO_0000258446" description="Large ribosomal subunit protein bL9">
    <location>
        <begin position="1"/>
        <end position="173"/>
    </location>
</feature>
<gene>
    <name evidence="1" type="primary">rplI</name>
    <name type="ordered locus">CF0198</name>
</gene>
<protein>
    <recommendedName>
        <fullName evidence="1">Large ribosomal subunit protein bL9</fullName>
    </recommendedName>
    <alternativeName>
        <fullName evidence="2">50S ribosomal protein L9</fullName>
    </alternativeName>
</protein>